<organism>
    <name type="scientific">Treponema pallidum (strain Nichols)</name>
    <dbReference type="NCBI Taxonomy" id="243276"/>
    <lineage>
        <taxon>Bacteria</taxon>
        <taxon>Pseudomonadati</taxon>
        <taxon>Spirochaetota</taxon>
        <taxon>Spirochaetia</taxon>
        <taxon>Spirochaetales</taxon>
        <taxon>Treponemataceae</taxon>
        <taxon>Treponema</taxon>
    </lineage>
</organism>
<reference key="1">
    <citation type="journal article" date="1998" name="Science">
        <title>Complete genome sequence of Treponema pallidum, the syphilis spirochete.</title>
        <authorList>
            <person name="Fraser C.M."/>
            <person name="Norris S.J."/>
            <person name="Weinstock G.M."/>
            <person name="White O."/>
            <person name="Sutton G.G."/>
            <person name="Dodson R.J."/>
            <person name="Gwinn M.L."/>
            <person name="Hickey E.K."/>
            <person name="Clayton R.A."/>
            <person name="Ketchum K.A."/>
            <person name="Sodergren E."/>
            <person name="Hardham J.M."/>
            <person name="McLeod M.P."/>
            <person name="Salzberg S.L."/>
            <person name="Peterson J.D."/>
            <person name="Khalak H.G."/>
            <person name="Richardson D.L."/>
            <person name="Howell J.K."/>
            <person name="Chidambaram M."/>
            <person name="Utterback T.R."/>
            <person name="McDonald L.A."/>
            <person name="Artiach P."/>
            <person name="Bowman C."/>
            <person name="Cotton M.D."/>
            <person name="Fujii C."/>
            <person name="Garland S.A."/>
            <person name="Hatch B."/>
            <person name="Horst K."/>
            <person name="Roberts K.M."/>
            <person name="Sandusky M."/>
            <person name="Weidman J.F."/>
            <person name="Smith H.O."/>
            <person name="Venter J.C."/>
        </authorList>
    </citation>
    <scope>NUCLEOTIDE SEQUENCE [LARGE SCALE GENOMIC DNA]</scope>
    <source>
        <strain>Nichols</strain>
    </source>
</reference>
<feature type="chain" id="PRO_0000108552" description="Transcriptional regulator MraZ">
    <location>
        <begin position="1"/>
        <end position="149"/>
    </location>
</feature>
<feature type="domain" description="SpoVT-AbrB 1" evidence="2">
    <location>
        <begin position="9"/>
        <end position="52"/>
    </location>
</feature>
<feature type="domain" description="SpoVT-AbrB 2" evidence="2">
    <location>
        <begin position="82"/>
        <end position="125"/>
    </location>
</feature>
<sequence>MEDNAFTGAYSYNLDEKGRLMLPARLRVALSDTRLVLTCAIESCLWVFPRAQWDRFSSQISARASLFHAPSRAVLRRLIAPAQEVELDRAWRLFIPPSLREYAALEKDCLILGLSHCLEIWDRARYRAYLAESEADFRAGTETLQDLCL</sequence>
<comment type="subunit">
    <text evidence="1">Forms oligomers.</text>
</comment>
<comment type="subcellular location">
    <subcellularLocation>
        <location evidence="1">Cytoplasm</location>
        <location evidence="1">Nucleoid</location>
    </subcellularLocation>
</comment>
<comment type="similarity">
    <text evidence="1">Belongs to the MraZ family.</text>
</comment>
<dbReference type="EMBL" id="AE000520">
    <property type="protein sequence ID" value="AAC65367.1"/>
    <property type="molecule type" value="Genomic_DNA"/>
</dbReference>
<dbReference type="PIR" id="A71331">
    <property type="entry name" value="A71331"/>
</dbReference>
<dbReference type="RefSeq" id="WP_010881831.1">
    <property type="nucleotide sequence ID" value="NC_021490.2"/>
</dbReference>
<dbReference type="SMR" id="O83398"/>
<dbReference type="IntAct" id="O83398">
    <property type="interactions" value="67"/>
</dbReference>
<dbReference type="STRING" id="243276.TP_0383"/>
<dbReference type="EnsemblBacteria" id="AAC65367">
    <property type="protein sequence ID" value="AAC65367"/>
    <property type="gene ID" value="TP_0383"/>
</dbReference>
<dbReference type="GeneID" id="93876157"/>
<dbReference type="KEGG" id="tpa:TP_0383"/>
<dbReference type="KEGG" id="tpw:TPANIC_0383"/>
<dbReference type="eggNOG" id="COG2001">
    <property type="taxonomic scope" value="Bacteria"/>
</dbReference>
<dbReference type="HOGENOM" id="CLU_107907_0_5_12"/>
<dbReference type="OrthoDB" id="9807753at2"/>
<dbReference type="Proteomes" id="UP000000811">
    <property type="component" value="Chromosome"/>
</dbReference>
<dbReference type="GO" id="GO:0005737">
    <property type="term" value="C:cytoplasm"/>
    <property type="evidence" value="ECO:0007669"/>
    <property type="project" value="UniProtKB-UniRule"/>
</dbReference>
<dbReference type="GO" id="GO:0009295">
    <property type="term" value="C:nucleoid"/>
    <property type="evidence" value="ECO:0007669"/>
    <property type="project" value="UniProtKB-SubCell"/>
</dbReference>
<dbReference type="GO" id="GO:0003700">
    <property type="term" value="F:DNA-binding transcription factor activity"/>
    <property type="evidence" value="ECO:0007669"/>
    <property type="project" value="UniProtKB-UniRule"/>
</dbReference>
<dbReference type="GO" id="GO:0000976">
    <property type="term" value="F:transcription cis-regulatory region binding"/>
    <property type="evidence" value="ECO:0007669"/>
    <property type="project" value="TreeGrafter"/>
</dbReference>
<dbReference type="GO" id="GO:2000143">
    <property type="term" value="P:negative regulation of DNA-templated transcription initiation"/>
    <property type="evidence" value="ECO:0007669"/>
    <property type="project" value="TreeGrafter"/>
</dbReference>
<dbReference type="CDD" id="cd16321">
    <property type="entry name" value="MraZ_C"/>
    <property type="match status" value="1"/>
</dbReference>
<dbReference type="CDD" id="cd16320">
    <property type="entry name" value="MraZ_N"/>
    <property type="match status" value="1"/>
</dbReference>
<dbReference type="Gene3D" id="3.40.1550.20">
    <property type="entry name" value="Transcriptional regulator MraZ domain"/>
    <property type="match status" value="1"/>
</dbReference>
<dbReference type="HAMAP" id="MF_01008">
    <property type="entry name" value="MraZ"/>
    <property type="match status" value="1"/>
</dbReference>
<dbReference type="InterPro" id="IPR003444">
    <property type="entry name" value="MraZ"/>
</dbReference>
<dbReference type="InterPro" id="IPR035644">
    <property type="entry name" value="MraZ_C"/>
</dbReference>
<dbReference type="InterPro" id="IPR020603">
    <property type="entry name" value="MraZ_dom"/>
</dbReference>
<dbReference type="InterPro" id="IPR035642">
    <property type="entry name" value="MraZ_N"/>
</dbReference>
<dbReference type="InterPro" id="IPR038619">
    <property type="entry name" value="MraZ_sf"/>
</dbReference>
<dbReference type="InterPro" id="IPR007159">
    <property type="entry name" value="SpoVT-AbrB_dom"/>
</dbReference>
<dbReference type="InterPro" id="IPR037914">
    <property type="entry name" value="SpoVT-AbrB_sf"/>
</dbReference>
<dbReference type="NCBIfam" id="TIGR00242">
    <property type="entry name" value="division/cell wall cluster transcriptional repressor MraZ"/>
    <property type="match status" value="1"/>
</dbReference>
<dbReference type="PANTHER" id="PTHR34701">
    <property type="entry name" value="TRANSCRIPTIONAL REGULATOR MRAZ"/>
    <property type="match status" value="1"/>
</dbReference>
<dbReference type="PANTHER" id="PTHR34701:SF1">
    <property type="entry name" value="TRANSCRIPTIONAL REGULATOR MRAZ"/>
    <property type="match status" value="1"/>
</dbReference>
<dbReference type="Pfam" id="PF02381">
    <property type="entry name" value="MraZ"/>
    <property type="match status" value="2"/>
</dbReference>
<dbReference type="SUPFAM" id="SSF89447">
    <property type="entry name" value="AbrB/MazE/MraZ-like"/>
    <property type="match status" value="1"/>
</dbReference>
<dbReference type="PROSITE" id="PS51740">
    <property type="entry name" value="SPOVT_ABRB"/>
    <property type="match status" value="2"/>
</dbReference>
<evidence type="ECO:0000255" key="1">
    <source>
        <dbReference type="HAMAP-Rule" id="MF_01008"/>
    </source>
</evidence>
<evidence type="ECO:0000255" key="2">
    <source>
        <dbReference type="PROSITE-ProRule" id="PRU01076"/>
    </source>
</evidence>
<proteinExistence type="inferred from homology"/>
<keyword id="KW-0963">Cytoplasm</keyword>
<keyword id="KW-0238">DNA-binding</keyword>
<keyword id="KW-1185">Reference proteome</keyword>
<keyword id="KW-0677">Repeat</keyword>
<keyword id="KW-0804">Transcription</keyword>
<keyword id="KW-0805">Transcription regulation</keyword>
<gene>
    <name evidence="1" type="primary">mraZ</name>
    <name type="ordered locus">TP_0383</name>
</gene>
<protein>
    <recommendedName>
        <fullName>Transcriptional regulator MraZ</fullName>
    </recommendedName>
</protein>
<name>MRAZ_TREPA</name>
<accession>O83398</accession>